<gene>
    <name evidence="1" type="primary">dcd</name>
    <name type="ordered locus">SARI_00775</name>
</gene>
<comment type="function">
    <text evidence="1">Catalyzes the deamination of dCTP to dUTP.</text>
</comment>
<comment type="catalytic activity">
    <reaction evidence="1">
        <text>dCTP + H2O + H(+) = dUTP + NH4(+)</text>
        <dbReference type="Rhea" id="RHEA:22680"/>
        <dbReference type="ChEBI" id="CHEBI:15377"/>
        <dbReference type="ChEBI" id="CHEBI:15378"/>
        <dbReference type="ChEBI" id="CHEBI:28938"/>
        <dbReference type="ChEBI" id="CHEBI:61481"/>
        <dbReference type="ChEBI" id="CHEBI:61555"/>
        <dbReference type="EC" id="3.5.4.13"/>
    </reaction>
</comment>
<comment type="pathway">
    <text evidence="1">Pyrimidine metabolism; dUMP biosynthesis; dUMP from dCTP (dUTP route): step 1/2.</text>
</comment>
<comment type="subunit">
    <text evidence="1">Homotrimer.</text>
</comment>
<comment type="similarity">
    <text evidence="1">Belongs to the dCTP deaminase family.</text>
</comment>
<protein>
    <recommendedName>
        <fullName evidence="1">dCTP deaminase</fullName>
        <ecNumber evidence="1">3.5.4.13</ecNumber>
    </recommendedName>
    <alternativeName>
        <fullName evidence="1">Deoxycytidine triphosphate deaminase</fullName>
    </alternativeName>
</protein>
<sequence>MRLCDRDIEAWLDEGRLSITPRPPVERINGATVDVRLGNKFRTFRGHTAAFIDLSGPKDEVSAALDRVMSDEIVLPDGEAFYLHPGELALAVTYESVTLPPDLVGWLDGRSSLARLGLMVHVTAHRIDPGWSGCIVLEFYNSGKLPLALRPGMLIGALSFEPLSGPAARPYNRRQDAKYRDQQGAVASRIDKD</sequence>
<feature type="chain" id="PRO_1000076628" description="dCTP deaminase">
    <location>
        <begin position="1"/>
        <end position="193"/>
    </location>
</feature>
<feature type="region of interest" description="Disordered" evidence="2">
    <location>
        <begin position="169"/>
        <end position="193"/>
    </location>
</feature>
<feature type="active site" description="Proton donor/acceptor" evidence="1">
    <location>
        <position position="138"/>
    </location>
</feature>
<feature type="binding site" evidence="1">
    <location>
        <begin position="110"/>
        <end position="115"/>
    </location>
    <ligand>
        <name>dCTP</name>
        <dbReference type="ChEBI" id="CHEBI:61481"/>
    </ligand>
</feature>
<feature type="binding site" evidence="1">
    <location>
        <position position="128"/>
    </location>
    <ligand>
        <name>dCTP</name>
        <dbReference type="ChEBI" id="CHEBI:61481"/>
    </ligand>
</feature>
<feature type="binding site" evidence="1">
    <location>
        <begin position="136"/>
        <end position="138"/>
    </location>
    <ligand>
        <name>dCTP</name>
        <dbReference type="ChEBI" id="CHEBI:61481"/>
    </ligand>
</feature>
<feature type="binding site" evidence="1">
    <location>
        <position position="171"/>
    </location>
    <ligand>
        <name>dCTP</name>
        <dbReference type="ChEBI" id="CHEBI:61481"/>
    </ligand>
</feature>
<feature type="binding site" evidence="1">
    <location>
        <position position="178"/>
    </location>
    <ligand>
        <name>dCTP</name>
        <dbReference type="ChEBI" id="CHEBI:61481"/>
    </ligand>
</feature>
<feature type="binding site" evidence="1">
    <location>
        <position position="182"/>
    </location>
    <ligand>
        <name>dCTP</name>
        <dbReference type="ChEBI" id="CHEBI:61481"/>
    </ligand>
</feature>
<dbReference type="EC" id="3.5.4.13" evidence="1"/>
<dbReference type="EMBL" id="CP000880">
    <property type="protein sequence ID" value="ABX20695.1"/>
    <property type="molecule type" value="Genomic_DNA"/>
</dbReference>
<dbReference type="SMR" id="A9MKX9"/>
<dbReference type="STRING" id="41514.SARI_00775"/>
<dbReference type="KEGG" id="ses:SARI_00775"/>
<dbReference type="HOGENOM" id="CLU_087476_2_0_6"/>
<dbReference type="UniPathway" id="UPA00610">
    <property type="reaction ID" value="UER00665"/>
</dbReference>
<dbReference type="Proteomes" id="UP000002084">
    <property type="component" value="Chromosome"/>
</dbReference>
<dbReference type="GO" id="GO:0008829">
    <property type="term" value="F:dCTP deaminase activity"/>
    <property type="evidence" value="ECO:0007669"/>
    <property type="project" value="UniProtKB-UniRule"/>
</dbReference>
<dbReference type="GO" id="GO:0000166">
    <property type="term" value="F:nucleotide binding"/>
    <property type="evidence" value="ECO:0007669"/>
    <property type="project" value="UniProtKB-KW"/>
</dbReference>
<dbReference type="GO" id="GO:0006226">
    <property type="term" value="P:dUMP biosynthetic process"/>
    <property type="evidence" value="ECO:0007669"/>
    <property type="project" value="UniProtKB-UniPathway"/>
</dbReference>
<dbReference type="GO" id="GO:0006229">
    <property type="term" value="P:dUTP biosynthetic process"/>
    <property type="evidence" value="ECO:0007669"/>
    <property type="project" value="UniProtKB-UniRule"/>
</dbReference>
<dbReference type="GO" id="GO:0015949">
    <property type="term" value="P:nucleobase-containing small molecule interconversion"/>
    <property type="evidence" value="ECO:0007669"/>
    <property type="project" value="TreeGrafter"/>
</dbReference>
<dbReference type="CDD" id="cd07557">
    <property type="entry name" value="trimeric_dUTPase"/>
    <property type="match status" value="1"/>
</dbReference>
<dbReference type="FunFam" id="2.70.40.10:FF:000003">
    <property type="entry name" value="dCTP deaminase"/>
    <property type="match status" value="1"/>
</dbReference>
<dbReference type="Gene3D" id="2.70.40.10">
    <property type="match status" value="1"/>
</dbReference>
<dbReference type="HAMAP" id="MF_00146">
    <property type="entry name" value="dCTP_deaminase"/>
    <property type="match status" value="1"/>
</dbReference>
<dbReference type="InterPro" id="IPR011962">
    <property type="entry name" value="dCTP_deaminase"/>
</dbReference>
<dbReference type="InterPro" id="IPR036157">
    <property type="entry name" value="dUTPase-like_sf"/>
</dbReference>
<dbReference type="InterPro" id="IPR033704">
    <property type="entry name" value="dUTPase_trimeric"/>
</dbReference>
<dbReference type="NCBIfam" id="TIGR02274">
    <property type="entry name" value="dCTP_deam"/>
    <property type="match status" value="1"/>
</dbReference>
<dbReference type="PANTHER" id="PTHR42680">
    <property type="entry name" value="DCTP DEAMINASE"/>
    <property type="match status" value="1"/>
</dbReference>
<dbReference type="PANTHER" id="PTHR42680:SF3">
    <property type="entry name" value="DCTP DEAMINASE"/>
    <property type="match status" value="1"/>
</dbReference>
<dbReference type="Pfam" id="PF22769">
    <property type="entry name" value="DCD"/>
    <property type="match status" value="1"/>
</dbReference>
<dbReference type="SUPFAM" id="SSF51283">
    <property type="entry name" value="dUTPase-like"/>
    <property type="match status" value="1"/>
</dbReference>
<organism>
    <name type="scientific">Salmonella arizonae (strain ATCC BAA-731 / CDC346-86 / RSK2980)</name>
    <dbReference type="NCBI Taxonomy" id="41514"/>
    <lineage>
        <taxon>Bacteria</taxon>
        <taxon>Pseudomonadati</taxon>
        <taxon>Pseudomonadota</taxon>
        <taxon>Gammaproteobacteria</taxon>
        <taxon>Enterobacterales</taxon>
        <taxon>Enterobacteriaceae</taxon>
        <taxon>Salmonella</taxon>
    </lineage>
</organism>
<reference key="1">
    <citation type="submission" date="2007-11" db="EMBL/GenBank/DDBJ databases">
        <authorList>
            <consortium name="The Salmonella enterica serovar Arizonae Genome Sequencing Project"/>
            <person name="McClelland M."/>
            <person name="Sanderson E.K."/>
            <person name="Porwollik S."/>
            <person name="Spieth J."/>
            <person name="Clifton W.S."/>
            <person name="Fulton R."/>
            <person name="Chunyan W."/>
            <person name="Wollam A."/>
            <person name="Shah N."/>
            <person name="Pepin K."/>
            <person name="Bhonagiri V."/>
            <person name="Nash W."/>
            <person name="Johnson M."/>
            <person name="Thiruvilangam P."/>
            <person name="Wilson R."/>
        </authorList>
    </citation>
    <scope>NUCLEOTIDE SEQUENCE [LARGE SCALE GENOMIC DNA]</scope>
    <source>
        <strain>ATCC BAA-731 / CDC346-86 / RSK2980</strain>
    </source>
</reference>
<proteinExistence type="inferred from homology"/>
<accession>A9MKX9</accession>
<name>DCD_SALAR</name>
<evidence type="ECO:0000255" key="1">
    <source>
        <dbReference type="HAMAP-Rule" id="MF_00146"/>
    </source>
</evidence>
<evidence type="ECO:0000256" key="2">
    <source>
        <dbReference type="SAM" id="MobiDB-lite"/>
    </source>
</evidence>
<keyword id="KW-0378">Hydrolase</keyword>
<keyword id="KW-0546">Nucleotide metabolism</keyword>
<keyword id="KW-0547">Nucleotide-binding</keyword>
<keyword id="KW-1185">Reference proteome</keyword>